<proteinExistence type="inferred from homology"/>
<protein>
    <recommendedName>
        <fullName evidence="1">Endonuclease V</fullName>
        <ecNumber evidence="1">3.1.21.7</ecNumber>
    </recommendedName>
    <alternativeName>
        <fullName evidence="1">Deoxyinosine 3'endonuclease</fullName>
    </alternativeName>
    <alternativeName>
        <fullName evidence="1">Deoxyribonuclease V</fullName>
        <shortName evidence="1">DNase V</shortName>
    </alternativeName>
</protein>
<accession>A7NSC5</accession>
<dbReference type="EC" id="3.1.21.7" evidence="1"/>
<dbReference type="EMBL" id="CP000804">
    <property type="protein sequence ID" value="ABU58464.1"/>
    <property type="molecule type" value="Genomic_DNA"/>
</dbReference>
<dbReference type="RefSeq" id="WP_012120888.1">
    <property type="nucleotide sequence ID" value="NC_009767.1"/>
</dbReference>
<dbReference type="SMR" id="A7NSC5"/>
<dbReference type="STRING" id="383372.Rcas_2382"/>
<dbReference type="KEGG" id="rca:Rcas_2382"/>
<dbReference type="eggNOG" id="COG1515">
    <property type="taxonomic scope" value="Bacteria"/>
</dbReference>
<dbReference type="HOGENOM" id="CLU_047631_1_1_0"/>
<dbReference type="OrthoDB" id="9790916at2"/>
<dbReference type="Proteomes" id="UP000000263">
    <property type="component" value="Chromosome"/>
</dbReference>
<dbReference type="GO" id="GO:0005737">
    <property type="term" value="C:cytoplasm"/>
    <property type="evidence" value="ECO:0007669"/>
    <property type="project" value="UniProtKB-SubCell"/>
</dbReference>
<dbReference type="GO" id="GO:0043737">
    <property type="term" value="F:deoxyribonuclease V activity"/>
    <property type="evidence" value="ECO:0007669"/>
    <property type="project" value="UniProtKB-UniRule"/>
</dbReference>
<dbReference type="GO" id="GO:0000287">
    <property type="term" value="F:magnesium ion binding"/>
    <property type="evidence" value="ECO:0007669"/>
    <property type="project" value="UniProtKB-UniRule"/>
</dbReference>
<dbReference type="GO" id="GO:0016891">
    <property type="term" value="F:RNA endonuclease activity, producing 5'-phosphomonoesters"/>
    <property type="evidence" value="ECO:0007669"/>
    <property type="project" value="TreeGrafter"/>
</dbReference>
<dbReference type="GO" id="GO:0003727">
    <property type="term" value="F:single-stranded RNA binding"/>
    <property type="evidence" value="ECO:0007669"/>
    <property type="project" value="TreeGrafter"/>
</dbReference>
<dbReference type="GO" id="GO:0006281">
    <property type="term" value="P:DNA repair"/>
    <property type="evidence" value="ECO:0007669"/>
    <property type="project" value="UniProtKB-UniRule"/>
</dbReference>
<dbReference type="CDD" id="cd06559">
    <property type="entry name" value="Endonuclease_V"/>
    <property type="match status" value="1"/>
</dbReference>
<dbReference type="Gene3D" id="3.30.2170.10">
    <property type="entry name" value="archaeoglobus fulgidus dsm 4304 superfamily"/>
    <property type="match status" value="1"/>
</dbReference>
<dbReference type="HAMAP" id="MF_00801">
    <property type="entry name" value="Endonuclease_5"/>
    <property type="match status" value="1"/>
</dbReference>
<dbReference type="InterPro" id="IPR007581">
    <property type="entry name" value="Endonuclease-V"/>
</dbReference>
<dbReference type="NCBIfam" id="NF008629">
    <property type="entry name" value="PRK11617.1"/>
    <property type="match status" value="1"/>
</dbReference>
<dbReference type="PANTHER" id="PTHR28511">
    <property type="entry name" value="ENDONUCLEASE V"/>
    <property type="match status" value="1"/>
</dbReference>
<dbReference type="PANTHER" id="PTHR28511:SF1">
    <property type="entry name" value="ENDONUCLEASE V"/>
    <property type="match status" value="1"/>
</dbReference>
<dbReference type="Pfam" id="PF04493">
    <property type="entry name" value="Endonuclease_5"/>
    <property type="match status" value="1"/>
</dbReference>
<keyword id="KW-0963">Cytoplasm</keyword>
<keyword id="KW-0227">DNA damage</keyword>
<keyword id="KW-0234">DNA repair</keyword>
<keyword id="KW-0255">Endonuclease</keyword>
<keyword id="KW-0378">Hydrolase</keyword>
<keyword id="KW-0460">Magnesium</keyword>
<keyword id="KW-0479">Metal-binding</keyword>
<keyword id="KW-0540">Nuclease</keyword>
<keyword id="KW-1185">Reference proteome</keyword>
<feature type="chain" id="PRO_1000148537" description="Endonuclease V">
    <location>
        <begin position="1"/>
        <end position="222"/>
    </location>
</feature>
<feature type="binding site" evidence="1">
    <location>
        <position position="43"/>
    </location>
    <ligand>
        <name>Mg(2+)</name>
        <dbReference type="ChEBI" id="CHEBI:18420"/>
    </ligand>
</feature>
<feature type="binding site" evidence="1">
    <location>
        <position position="109"/>
    </location>
    <ligand>
        <name>Mg(2+)</name>
        <dbReference type="ChEBI" id="CHEBI:18420"/>
    </ligand>
</feature>
<feature type="site" description="Interaction with target DNA" evidence="1">
    <location>
        <position position="79"/>
    </location>
</feature>
<evidence type="ECO:0000255" key="1">
    <source>
        <dbReference type="HAMAP-Rule" id="MF_00801"/>
    </source>
</evidence>
<comment type="function">
    <text evidence="1">DNA repair enzyme involved in the repair of deaminated bases. Selectively cleaves double-stranded DNA at the second phosphodiester bond 3' to a deoxyinosine leaving behind the intact lesion on the nicked DNA.</text>
</comment>
<comment type="catalytic activity">
    <reaction evidence="1">
        <text>Endonucleolytic cleavage at apurinic or apyrimidinic sites to products with a 5'-phosphate.</text>
        <dbReference type="EC" id="3.1.21.7"/>
    </reaction>
</comment>
<comment type="cofactor">
    <cofactor evidence="1">
        <name>Mg(2+)</name>
        <dbReference type="ChEBI" id="CHEBI:18420"/>
    </cofactor>
</comment>
<comment type="subcellular location">
    <subcellularLocation>
        <location evidence="1">Cytoplasm</location>
    </subcellularLocation>
</comment>
<comment type="similarity">
    <text evidence="1">Belongs to the endonuclease V family.</text>
</comment>
<gene>
    <name evidence="1" type="primary">nfi</name>
    <name type="ordered locus">Rcas_2382</name>
</gene>
<organism>
    <name type="scientific">Roseiflexus castenholzii (strain DSM 13941 / HLO8)</name>
    <dbReference type="NCBI Taxonomy" id="383372"/>
    <lineage>
        <taxon>Bacteria</taxon>
        <taxon>Bacillati</taxon>
        <taxon>Chloroflexota</taxon>
        <taxon>Chloroflexia</taxon>
        <taxon>Chloroflexales</taxon>
        <taxon>Roseiflexineae</taxon>
        <taxon>Roseiflexaceae</taxon>
        <taxon>Roseiflexus</taxon>
    </lineage>
</organism>
<sequence>MKPSADHPWPVDLGEARVIQERIRAQVITCDAFGPIRTVAGVDAGYSGDSALAAVVVLAFPSLQALDYAVARRQISFPYVPGYLSFREAPAVLDALASLRITPDLLMCDGHGLAHPRRCGIACHLGVLTDLPSIGCAKSVLVGAHDPLPDVRGAWTPLRHDDEIVGAALRTRPGVRPVYVSVGHRVSLETAIQFVMACVTRYRLPETTRAADALASQGRIPR</sequence>
<name>NFI_ROSCS</name>
<reference key="1">
    <citation type="submission" date="2007-08" db="EMBL/GenBank/DDBJ databases">
        <title>Complete sequence of Roseiflexus castenholzii DSM 13941.</title>
        <authorList>
            <consortium name="US DOE Joint Genome Institute"/>
            <person name="Copeland A."/>
            <person name="Lucas S."/>
            <person name="Lapidus A."/>
            <person name="Barry K."/>
            <person name="Glavina del Rio T."/>
            <person name="Dalin E."/>
            <person name="Tice H."/>
            <person name="Pitluck S."/>
            <person name="Thompson L.S."/>
            <person name="Brettin T."/>
            <person name="Bruce D."/>
            <person name="Detter J.C."/>
            <person name="Han C."/>
            <person name="Tapia R."/>
            <person name="Schmutz J."/>
            <person name="Larimer F."/>
            <person name="Land M."/>
            <person name="Hauser L."/>
            <person name="Kyrpides N."/>
            <person name="Mikhailova N."/>
            <person name="Bryant D.A."/>
            <person name="Hanada S."/>
            <person name="Tsukatani Y."/>
            <person name="Richardson P."/>
        </authorList>
    </citation>
    <scope>NUCLEOTIDE SEQUENCE [LARGE SCALE GENOMIC DNA]</scope>
    <source>
        <strain>DSM 13941 / HLO8</strain>
    </source>
</reference>